<comment type="function">
    <text evidence="1">Part of a complex that catalyzes the formation of methyl-coenzyme M and tetrahydromethanopterin from coenzyme M and methyl-tetrahydromethanopterin. This is an energy-conserving, sodium-ion translocating step.</text>
</comment>
<comment type="catalytic activity">
    <reaction evidence="1">
        <text>5-methyl-5,6,7,8-tetrahydromethanopterin + coenzyme M + 2 Na(+)(in) = 5,6,7,8-tetrahydromethanopterin + methyl-coenzyme M + 2 Na(+)(out)</text>
        <dbReference type="Rhea" id="RHEA:53492"/>
        <dbReference type="ChEBI" id="CHEBI:29101"/>
        <dbReference type="ChEBI" id="CHEBI:58103"/>
        <dbReference type="ChEBI" id="CHEBI:58116"/>
        <dbReference type="ChEBI" id="CHEBI:58286"/>
        <dbReference type="ChEBI" id="CHEBI:58319"/>
        <dbReference type="EC" id="7.2.1.4"/>
    </reaction>
</comment>
<comment type="cofactor">
    <cofactor evidence="1">
        <name>5-hydroxybenzimidazolylcob(I)amide</name>
        <dbReference type="ChEBI" id="CHEBI:60494"/>
    </cofactor>
    <text evidence="1">Binds 1 5-hydroxybenzimidazolylcobamide group.</text>
</comment>
<comment type="pathway">
    <text evidence="1">One-carbon metabolism; methanogenesis from CO(2); methyl-coenzyme M from 5,10-methylene-5,6,7,8-tetrahydromethanopterin: step 2/2.</text>
</comment>
<comment type="subunit">
    <text evidence="1">The complex is composed of 8 subunits; MtrA, MtrB, MtrC, MtrD, MtrE, MtrF, MtrG and MtrH.</text>
</comment>
<comment type="subcellular location">
    <subcellularLocation>
        <location evidence="1">Cell membrane</location>
        <topology evidence="1">Single-pass membrane protein</topology>
    </subcellularLocation>
</comment>
<comment type="similarity">
    <text evidence="1">Belongs to the MtrA family.</text>
</comment>
<evidence type="ECO:0000255" key="1">
    <source>
        <dbReference type="HAMAP-Rule" id="MF_01093"/>
    </source>
</evidence>
<proteinExistence type="inferred from homology"/>
<organism>
    <name type="scientific">Methanococcus aeolicus (strain ATCC BAA-1280 / DSM 17508 / OCM 812 / Nankai-3)</name>
    <dbReference type="NCBI Taxonomy" id="419665"/>
    <lineage>
        <taxon>Archaea</taxon>
        <taxon>Methanobacteriati</taxon>
        <taxon>Methanobacteriota</taxon>
        <taxon>Methanomada group</taxon>
        <taxon>Methanococci</taxon>
        <taxon>Methanococcales</taxon>
        <taxon>Methanococcaceae</taxon>
        <taxon>Methanococcus</taxon>
    </lineage>
</organism>
<sequence length="240" mass="25070">MADKKAPASGWPIVSGEYVVGNPESCVAVVTLGSHGLDEAAIEAGAAISGPCHTENLGIEKVVANYISNPNIRFMLVTGSEVQGHITGQCFKALYENGIGDDGGIIGAKGAIPFLENAGQDAISRFQNQLVEIVDLIDVEDTGKISSAIKDCISKDPGAFEEDPMILDLEGGGGEAGADESTSIKPAAPETVLLEARMRMISEKINDAALIAKFNSGYYNGKIQGIAIGLFLSLLIFSLL</sequence>
<dbReference type="EC" id="7.2.1.4" evidence="1"/>
<dbReference type="EMBL" id="CP000743">
    <property type="protein sequence ID" value="ABR56849.1"/>
    <property type="molecule type" value="Genomic_DNA"/>
</dbReference>
<dbReference type="RefSeq" id="WP_011973981.1">
    <property type="nucleotide sequence ID" value="NC_009635.1"/>
</dbReference>
<dbReference type="SMR" id="A6UWH7"/>
<dbReference type="STRING" id="419665.Maeo_1273"/>
<dbReference type="GeneID" id="5327467"/>
<dbReference type="GeneID" id="75304737"/>
<dbReference type="KEGG" id="mae:Maeo_1273"/>
<dbReference type="eggNOG" id="arCOG03221">
    <property type="taxonomic scope" value="Archaea"/>
</dbReference>
<dbReference type="HOGENOM" id="CLU_100863_0_0_2"/>
<dbReference type="OrthoDB" id="130682at2157"/>
<dbReference type="UniPathway" id="UPA00640">
    <property type="reaction ID" value="UER00698"/>
</dbReference>
<dbReference type="Proteomes" id="UP000001106">
    <property type="component" value="Chromosome"/>
</dbReference>
<dbReference type="GO" id="GO:0005886">
    <property type="term" value="C:plasma membrane"/>
    <property type="evidence" value="ECO:0007669"/>
    <property type="project" value="UniProtKB-SubCell"/>
</dbReference>
<dbReference type="GO" id="GO:0050897">
    <property type="term" value="F:cobalt ion binding"/>
    <property type="evidence" value="ECO:0007669"/>
    <property type="project" value="InterPro"/>
</dbReference>
<dbReference type="GO" id="GO:0030269">
    <property type="term" value="F:tetrahydromethanopterin S-methyltransferase activity"/>
    <property type="evidence" value="ECO:0007669"/>
    <property type="project" value="UniProtKB-UniRule"/>
</dbReference>
<dbReference type="GO" id="GO:0019386">
    <property type="term" value="P:methanogenesis, from carbon dioxide"/>
    <property type="evidence" value="ECO:0007669"/>
    <property type="project" value="UniProtKB-UniRule"/>
</dbReference>
<dbReference type="GO" id="GO:0032259">
    <property type="term" value="P:methylation"/>
    <property type="evidence" value="ECO:0007669"/>
    <property type="project" value="UniProtKB-KW"/>
</dbReference>
<dbReference type="GO" id="GO:0006730">
    <property type="term" value="P:one-carbon metabolic process"/>
    <property type="evidence" value="ECO:0007669"/>
    <property type="project" value="UniProtKB-UniRule"/>
</dbReference>
<dbReference type="HAMAP" id="MF_01093">
    <property type="entry name" value="MtrA"/>
    <property type="match status" value="1"/>
</dbReference>
<dbReference type="InterPro" id="IPR030688">
    <property type="entry name" value="MeTrfase_MtrA/MtxA"/>
</dbReference>
<dbReference type="InterPro" id="IPR005778">
    <property type="entry name" value="MtrA"/>
</dbReference>
<dbReference type="NCBIfam" id="TIGR01111">
    <property type="entry name" value="mtrA"/>
    <property type="match status" value="1"/>
</dbReference>
<dbReference type="NCBIfam" id="NF002126">
    <property type="entry name" value="PRK00964.1-4"/>
    <property type="match status" value="1"/>
</dbReference>
<dbReference type="Pfam" id="PF04208">
    <property type="entry name" value="MtrA"/>
    <property type="match status" value="1"/>
</dbReference>
<dbReference type="PIRSF" id="PIRSF500207">
    <property type="entry name" value="MtrA"/>
    <property type="match status" value="1"/>
</dbReference>
<dbReference type="PIRSF" id="PIRSF009452">
    <property type="entry name" value="MtrA_MtxA"/>
    <property type="match status" value="1"/>
</dbReference>
<name>MTRA_META3</name>
<reference key="1">
    <citation type="submission" date="2007-06" db="EMBL/GenBank/DDBJ databases">
        <title>Complete sequence of Methanococcus aeolicus Nankai-3.</title>
        <authorList>
            <consortium name="US DOE Joint Genome Institute"/>
            <person name="Copeland A."/>
            <person name="Lucas S."/>
            <person name="Lapidus A."/>
            <person name="Barry K."/>
            <person name="Glavina del Rio T."/>
            <person name="Dalin E."/>
            <person name="Tice H."/>
            <person name="Pitluck S."/>
            <person name="Chain P."/>
            <person name="Malfatti S."/>
            <person name="Shin M."/>
            <person name="Vergez L."/>
            <person name="Schmutz J."/>
            <person name="Larimer F."/>
            <person name="Land M."/>
            <person name="Hauser L."/>
            <person name="Kyrpides N."/>
            <person name="Lykidis A."/>
            <person name="Sieprawska-Lupa M."/>
            <person name="Whitman W.B."/>
            <person name="Richardson P."/>
        </authorList>
    </citation>
    <scope>NUCLEOTIDE SEQUENCE [LARGE SCALE GENOMIC DNA]</scope>
    <source>
        <strain>ATCC BAA-1280 / DSM 17508 / OCM 812 / Nankai-3</strain>
    </source>
</reference>
<accession>A6UWH7</accession>
<gene>
    <name evidence="1" type="primary">mtrA</name>
    <name type="ordered locus">Maeo_1273</name>
</gene>
<protein>
    <recommendedName>
        <fullName evidence="1">Tetrahydromethanopterin S-methyltransferase subunit A</fullName>
        <ecNumber evidence="1">7.2.1.4</ecNumber>
    </recommendedName>
    <alternativeName>
        <fullName evidence="1">N5-methyltetrahydromethanopterin--coenzyme M methyltransferase subunit A</fullName>
    </alternativeName>
</protein>
<feature type="chain" id="PRO_0000403062" description="Tetrahydromethanopterin S-methyltransferase subunit A">
    <location>
        <begin position="1"/>
        <end position="240"/>
    </location>
</feature>
<feature type="topological domain" description="Cytoplasmic" evidence="1">
    <location>
        <begin position="1"/>
        <end position="216"/>
    </location>
</feature>
<feature type="transmembrane region" description="Helical" evidence="1">
    <location>
        <begin position="217"/>
        <end position="234"/>
    </location>
</feature>
<feature type="topological domain" description="Extracellular" evidence="1">
    <location>
        <begin position="235"/>
        <end position="240"/>
    </location>
</feature>
<feature type="binding site" evidence="1">
    <location>
        <position position="85"/>
    </location>
    <ligand>
        <name>5-hydroxybenzimidazolylcob(I)amide</name>
        <dbReference type="ChEBI" id="CHEBI:60494"/>
        <note>cofactor</note>
    </ligand>
</feature>
<keyword id="KW-1003">Cell membrane</keyword>
<keyword id="KW-0170">Cobalt</keyword>
<keyword id="KW-0472">Membrane</keyword>
<keyword id="KW-0484">Methanogenesis</keyword>
<keyword id="KW-0489">Methyltransferase</keyword>
<keyword id="KW-0554">One-carbon metabolism</keyword>
<keyword id="KW-0808">Transferase</keyword>
<keyword id="KW-1278">Translocase</keyword>
<keyword id="KW-0812">Transmembrane</keyword>
<keyword id="KW-1133">Transmembrane helix</keyword>